<comment type="catalytic activity">
    <reaction evidence="1">
        <text>(S)-4-amino-5-oxopentanoate = 5-aminolevulinate</text>
        <dbReference type="Rhea" id="RHEA:14265"/>
        <dbReference type="ChEBI" id="CHEBI:57501"/>
        <dbReference type="ChEBI" id="CHEBI:356416"/>
        <dbReference type="EC" id="5.4.3.8"/>
    </reaction>
</comment>
<comment type="cofactor">
    <cofactor evidence="1">
        <name>pyridoxal 5'-phosphate</name>
        <dbReference type="ChEBI" id="CHEBI:597326"/>
    </cofactor>
</comment>
<comment type="pathway">
    <text evidence="1">Porphyrin-containing compound metabolism; protoporphyrin-IX biosynthesis; 5-aminolevulinate from L-glutamyl-tRNA(Glu): step 2/2.</text>
</comment>
<comment type="subunit">
    <text evidence="1">Homodimer.</text>
</comment>
<comment type="subcellular location">
    <subcellularLocation>
        <location evidence="1">Cytoplasm</location>
    </subcellularLocation>
</comment>
<comment type="similarity">
    <text evidence="1">Belongs to the class-III pyridoxal-phosphate-dependent aminotransferase family. HemL subfamily.</text>
</comment>
<evidence type="ECO:0000255" key="1">
    <source>
        <dbReference type="HAMAP-Rule" id="MF_00375"/>
    </source>
</evidence>
<accession>A1ASE9</accession>
<name>GSA_PELPD</name>
<proteinExistence type="inferred from homology"/>
<reference key="1">
    <citation type="submission" date="2006-10" db="EMBL/GenBank/DDBJ databases">
        <title>Complete sequence of chromosome of Pelobacter propionicus DSM 2379.</title>
        <authorList>
            <consortium name="US DOE Joint Genome Institute"/>
            <person name="Copeland A."/>
            <person name="Lucas S."/>
            <person name="Lapidus A."/>
            <person name="Barry K."/>
            <person name="Detter J.C."/>
            <person name="Glavina del Rio T."/>
            <person name="Hammon N."/>
            <person name="Israni S."/>
            <person name="Dalin E."/>
            <person name="Tice H."/>
            <person name="Pitluck S."/>
            <person name="Saunders E."/>
            <person name="Brettin T."/>
            <person name="Bruce D."/>
            <person name="Han C."/>
            <person name="Tapia R."/>
            <person name="Schmutz J."/>
            <person name="Larimer F."/>
            <person name="Land M."/>
            <person name="Hauser L."/>
            <person name="Kyrpides N."/>
            <person name="Kim E."/>
            <person name="Lovley D."/>
            <person name="Richardson P."/>
        </authorList>
    </citation>
    <scope>NUCLEOTIDE SEQUENCE [LARGE SCALE GENOMIC DNA]</scope>
    <source>
        <strain>DSM 2379 / NBRC 103807 / OttBd1</strain>
    </source>
</reference>
<dbReference type="EC" id="5.4.3.8" evidence="1"/>
<dbReference type="EMBL" id="CP000482">
    <property type="protein sequence ID" value="ABL00270.1"/>
    <property type="molecule type" value="Genomic_DNA"/>
</dbReference>
<dbReference type="RefSeq" id="WP_011736522.1">
    <property type="nucleotide sequence ID" value="NC_008609.1"/>
</dbReference>
<dbReference type="SMR" id="A1ASE9"/>
<dbReference type="STRING" id="338966.Ppro_2666"/>
<dbReference type="KEGG" id="ppd:Ppro_2666"/>
<dbReference type="eggNOG" id="COG0001">
    <property type="taxonomic scope" value="Bacteria"/>
</dbReference>
<dbReference type="HOGENOM" id="CLU_016922_1_5_7"/>
<dbReference type="OrthoDB" id="9801052at2"/>
<dbReference type="UniPathway" id="UPA00251">
    <property type="reaction ID" value="UER00317"/>
</dbReference>
<dbReference type="Proteomes" id="UP000006732">
    <property type="component" value="Chromosome"/>
</dbReference>
<dbReference type="GO" id="GO:0005737">
    <property type="term" value="C:cytoplasm"/>
    <property type="evidence" value="ECO:0007669"/>
    <property type="project" value="UniProtKB-SubCell"/>
</dbReference>
<dbReference type="GO" id="GO:0042286">
    <property type="term" value="F:glutamate-1-semialdehyde 2,1-aminomutase activity"/>
    <property type="evidence" value="ECO:0007669"/>
    <property type="project" value="UniProtKB-UniRule"/>
</dbReference>
<dbReference type="GO" id="GO:0030170">
    <property type="term" value="F:pyridoxal phosphate binding"/>
    <property type="evidence" value="ECO:0007669"/>
    <property type="project" value="InterPro"/>
</dbReference>
<dbReference type="GO" id="GO:0008483">
    <property type="term" value="F:transaminase activity"/>
    <property type="evidence" value="ECO:0007669"/>
    <property type="project" value="InterPro"/>
</dbReference>
<dbReference type="GO" id="GO:0006782">
    <property type="term" value="P:protoporphyrinogen IX biosynthetic process"/>
    <property type="evidence" value="ECO:0007669"/>
    <property type="project" value="UniProtKB-UniRule"/>
</dbReference>
<dbReference type="CDD" id="cd00610">
    <property type="entry name" value="OAT_like"/>
    <property type="match status" value="1"/>
</dbReference>
<dbReference type="FunFam" id="3.40.640.10:FF:000021">
    <property type="entry name" value="Glutamate-1-semialdehyde 2,1-aminomutase"/>
    <property type="match status" value="1"/>
</dbReference>
<dbReference type="Gene3D" id="3.90.1150.10">
    <property type="entry name" value="Aspartate Aminotransferase, domain 1"/>
    <property type="match status" value="1"/>
</dbReference>
<dbReference type="Gene3D" id="3.40.640.10">
    <property type="entry name" value="Type I PLP-dependent aspartate aminotransferase-like (Major domain)"/>
    <property type="match status" value="1"/>
</dbReference>
<dbReference type="HAMAP" id="MF_00375">
    <property type="entry name" value="HemL_aminotrans_3"/>
    <property type="match status" value="1"/>
</dbReference>
<dbReference type="InterPro" id="IPR004639">
    <property type="entry name" value="4pyrrol_synth_GluAld_NH2Trfase"/>
</dbReference>
<dbReference type="InterPro" id="IPR005814">
    <property type="entry name" value="Aminotrans_3"/>
</dbReference>
<dbReference type="InterPro" id="IPR049704">
    <property type="entry name" value="Aminotrans_3_PPA_site"/>
</dbReference>
<dbReference type="InterPro" id="IPR015424">
    <property type="entry name" value="PyrdxlP-dep_Trfase"/>
</dbReference>
<dbReference type="InterPro" id="IPR015421">
    <property type="entry name" value="PyrdxlP-dep_Trfase_major"/>
</dbReference>
<dbReference type="InterPro" id="IPR015422">
    <property type="entry name" value="PyrdxlP-dep_Trfase_small"/>
</dbReference>
<dbReference type="NCBIfam" id="TIGR00713">
    <property type="entry name" value="hemL"/>
    <property type="match status" value="1"/>
</dbReference>
<dbReference type="NCBIfam" id="NF000818">
    <property type="entry name" value="PRK00062.1"/>
    <property type="match status" value="1"/>
</dbReference>
<dbReference type="PANTHER" id="PTHR43713">
    <property type="entry name" value="GLUTAMATE-1-SEMIALDEHYDE 2,1-AMINOMUTASE"/>
    <property type="match status" value="1"/>
</dbReference>
<dbReference type="PANTHER" id="PTHR43713:SF3">
    <property type="entry name" value="GLUTAMATE-1-SEMIALDEHYDE 2,1-AMINOMUTASE 1, CHLOROPLASTIC-RELATED"/>
    <property type="match status" value="1"/>
</dbReference>
<dbReference type="Pfam" id="PF00202">
    <property type="entry name" value="Aminotran_3"/>
    <property type="match status" value="1"/>
</dbReference>
<dbReference type="SUPFAM" id="SSF53383">
    <property type="entry name" value="PLP-dependent transferases"/>
    <property type="match status" value="1"/>
</dbReference>
<dbReference type="PROSITE" id="PS00600">
    <property type="entry name" value="AA_TRANSFER_CLASS_3"/>
    <property type="match status" value="1"/>
</dbReference>
<keyword id="KW-0963">Cytoplasm</keyword>
<keyword id="KW-0413">Isomerase</keyword>
<keyword id="KW-0627">Porphyrin biosynthesis</keyword>
<keyword id="KW-0663">Pyridoxal phosphate</keyword>
<keyword id="KW-1185">Reference proteome</keyword>
<gene>
    <name evidence="1" type="primary">hemL</name>
    <name type="ordered locus">Ppro_2666</name>
</gene>
<protein>
    <recommendedName>
        <fullName evidence="1">Glutamate-1-semialdehyde 2,1-aminomutase</fullName>
        <shortName evidence="1">GSA</shortName>
        <ecNumber evidence="1">5.4.3.8</ecNumber>
    </recommendedName>
    <alternativeName>
        <fullName evidence="1">Glutamate-1-semialdehyde aminotransferase</fullName>
        <shortName evidence="1">GSA-AT</shortName>
    </alternativeName>
</protein>
<sequence length="428" mass="45049">MKQDRSSALFQQARQSIPGGVNSPVRAFKSVGSDPLFIQSASGCTITDVDGNTFIDYVGSWGPMIVGHCHPQVVEAVRQAAGSGASFGAPTEREITLANMVIDAVPSIEMVRMVSSGTEATMSAIRLARGYTGRDNIIKFSGCYHGHADSLLVRAGSGAATFGIPDSPGVPADFAKHTLTAEFNSLDSVRQLVADNPESIACIIVEPVAGNMGTVPPRDGFLEGLRQICSNEGIVLIFDEVMTGFRVAYGGAQERYGVTPDMTTLGKIIGGGLPVGAFGGRREIMEMLSPSGSVYQAGTLSGNPLAMSAGIATLSLLKQPGFYESLEEKSRHLAEGITDAARLAGYPIQTTRVGSMFCAFFSGQEVYDWAGASGCDTAAFAAYFKAMLNEGIYLAPSQFETAFVSAAHTDADIEATIRAAARCFKLIS</sequence>
<feature type="chain" id="PRO_0000300931" description="Glutamate-1-semialdehyde 2,1-aminomutase">
    <location>
        <begin position="1"/>
        <end position="428"/>
    </location>
</feature>
<feature type="modified residue" description="N6-(pyridoxal phosphate)lysine" evidence="1">
    <location>
        <position position="267"/>
    </location>
</feature>
<organism>
    <name type="scientific">Pelobacter propionicus (strain DSM 2379 / NBRC 103807 / OttBd1)</name>
    <dbReference type="NCBI Taxonomy" id="338966"/>
    <lineage>
        <taxon>Bacteria</taxon>
        <taxon>Pseudomonadati</taxon>
        <taxon>Thermodesulfobacteriota</taxon>
        <taxon>Desulfuromonadia</taxon>
        <taxon>Desulfuromonadales</taxon>
        <taxon>Desulfuromonadaceae</taxon>
        <taxon>Pelobacter</taxon>
    </lineage>
</organism>